<reference key="1">
    <citation type="journal article" date="2006" name="J. Bacteriol.">
        <title>Pathogenomic sequence analysis of Bacillus cereus and Bacillus thuringiensis isolates closely related to Bacillus anthracis.</title>
        <authorList>
            <person name="Han C.S."/>
            <person name="Xie G."/>
            <person name="Challacombe J.F."/>
            <person name="Altherr M.R."/>
            <person name="Bhotika S.S."/>
            <person name="Bruce D."/>
            <person name="Campbell C.S."/>
            <person name="Campbell M.L."/>
            <person name="Chen J."/>
            <person name="Chertkov O."/>
            <person name="Cleland C."/>
            <person name="Dimitrijevic M."/>
            <person name="Doggett N.A."/>
            <person name="Fawcett J.J."/>
            <person name="Glavina T."/>
            <person name="Goodwin L.A."/>
            <person name="Hill K.K."/>
            <person name="Hitchcock P."/>
            <person name="Jackson P.J."/>
            <person name="Keim P."/>
            <person name="Kewalramani A.R."/>
            <person name="Longmire J."/>
            <person name="Lucas S."/>
            <person name="Malfatti S."/>
            <person name="McMurry K."/>
            <person name="Meincke L.J."/>
            <person name="Misra M."/>
            <person name="Moseman B.L."/>
            <person name="Mundt M."/>
            <person name="Munk A.C."/>
            <person name="Okinaka R.T."/>
            <person name="Parson-Quintana B."/>
            <person name="Reilly L.P."/>
            <person name="Richardson P."/>
            <person name="Robinson D.L."/>
            <person name="Rubin E."/>
            <person name="Saunders E."/>
            <person name="Tapia R."/>
            <person name="Tesmer J.G."/>
            <person name="Thayer N."/>
            <person name="Thompson L.S."/>
            <person name="Tice H."/>
            <person name="Ticknor L.O."/>
            <person name="Wills P.L."/>
            <person name="Brettin T.S."/>
            <person name="Gilna P."/>
        </authorList>
    </citation>
    <scope>NUCLEOTIDE SEQUENCE [LARGE SCALE GENOMIC DNA]</scope>
    <source>
        <strain>ZK / E33L</strain>
    </source>
</reference>
<accession>Q63DV9</accession>
<name>CYSH_BACCZ</name>
<sequence>MLTYETWEENNVSFSEEDETKGALSVLSWAYKEYEGEIVYACSFGVEGMVLLHLINQVNPSAKVVFLDTNVHFQETYELIQKVRERFPSLNIIEKQPKLTLDEQAKLHGNKLWESNPNLCCKIRKILPLEESLANEKAWISGLRREQSETRKHTKFINQDHRFQSIKVCPLIHWTWKEVWRYVYKHSLPYNPLHDIGYPSIGCEKCTLPVGEGGDSRDGRWAGKVKTECGLHYQ</sequence>
<keyword id="KW-0963">Cytoplasm</keyword>
<keyword id="KW-0408">Iron</keyword>
<keyword id="KW-0411">Iron-sulfur</keyword>
<keyword id="KW-0479">Metal-binding</keyword>
<keyword id="KW-0560">Oxidoreductase</keyword>
<feature type="chain" id="PRO_1000008917" description="Adenosine 5'-phosphosulfate reductase">
    <location>
        <begin position="1"/>
        <end position="234"/>
    </location>
</feature>
<feature type="active site" description="Nucleophile; cysteine thiosulfonate intermediate" evidence="1">
    <location>
        <position position="229"/>
    </location>
</feature>
<feature type="binding site" evidence="1">
    <location>
        <position position="120"/>
    </location>
    <ligand>
        <name>[4Fe-4S] cluster</name>
        <dbReference type="ChEBI" id="CHEBI:49883"/>
    </ligand>
</feature>
<feature type="binding site" evidence="1">
    <location>
        <position position="121"/>
    </location>
    <ligand>
        <name>[4Fe-4S] cluster</name>
        <dbReference type="ChEBI" id="CHEBI:49883"/>
    </ligand>
</feature>
<feature type="binding site" evidence="1">
    <location>
        <position position="203"/>
    </location>
    <ligand>
        <name>[4Fe-4S] cluster</name>
        <dbReference type="ChEBI" id="CHEBI:49883"/>
    </ligand>
</feature>
<feature type="binding site" evidence="1">
    <location>
        <position position="206"/>
    </location>
    <ligand>
        <name>[4Fe-4S] cluster</name>
        <dbReference type="ChEBI" id="CHEBI:49883"/>
    </ligand>
</feature>
<gene>
    <name evidence="1" type="primary">cysH</name>
    <name type="ordered locus">BCE33L1304</name>
</gene>
<organism>
    <name type="scientific">Bacillus cereus (strain ZK / E33L)</name>
    <dbReference type="NCBI Taxonomy" id="288681"/>
    <lineage>
        <taxon>Bacteria</taxon>
        <taxon>Bacillati</taxon>
        <taxon>Bacillota</taxon>
        <taxon>Bacilli</taxon>
        <taxon>Bacillales</taxon>
        <taxon>Bacillaceae</taxon>
        <taxon>Bacillus</taxon>
        <taxon>Bacillus cereus group</taxon>
    </lineage>
</organism>
<dbReference type="EC" id="1.8.4.10" evidence="1"/>
<dbReference type="EMBL" id="CP000001">
    <property type="protein sequence ID" value="AAU18944.1"/>
    <property type="molecule type" value="Genomic_DNA"/>
</dbReference>
<dbReference type="RefSeq" id="WP_000959001.1">
    <property type="nucleotide sequence ID" value="NZ_CP009968.1"/>
</dbReference>
<dbReference type="SMR" id="Q63DV9"/>
<dbReference type="KEGG" id="bcz:BCE33L1304"/>
<dbReference type="PATRIC" id="fig|288681.22.peg.4248"/>
<dbReference type="Proteomes" id="UP000002612">
    <property type="component" value="Chromosome"/>
</dbReference>
<dbReference type="GO" id="GO:0005737">
    <property type="term" value="C:cytoplasm"/>
    <property type="evidence" value="ECO:0007669"/>
    <property type="project" value="UniProtKB-SubCell"/>
</dbReference>
<dbReference type="GO" id="GO:0051539">
    <property type="term" value="F:4 iron, 4 sulfur cluster binding"/>
    <property type="evidence" value="ECO:0007669"/>
    <property type="project" value="UniProtKB-UniRule"/>
</dbReference>
<dbReference type="GO" id="GO:0043866">
    <property type="term" value="F:adenylyl-sulfate reductase (thioredoxin) activity"/>
    <property type="evidence" value="ECO:0007669"/>
    <property type="project" value="UniProtKB-EC"/>
</dbReference>
<dbReference type="GO" id="GO:0046872">
    <property type="term" value="F:metal ion binding"/>
    <property type="evidence" value="ECO:0007669"/>
    <property type="project" value="UniProtKB-KW"/>
</dbReference>
<dbReference type="GO" id="GO:0004604">
    <property type="term" value="F:phosphoadenylyl-sulfate reductase (thioredoxin) activity"/>
    <property type="evidence" value="ECO:0007669"/>
    <property type="project" value="UniProtKB-UniRule"/>
</dbReference>
<dbReference type="GO" id="GO:0019344">
    <property type="term" value="P:cysteine biosynthetic process"/>
    <property type="evidence" value="ECO:0007669"/>
    <property type="project" value="InterPro"/>
</dbReference>
<dbReference type="GO" id="GO:0070814">
    <property type="term" value="P:hydrogen sulfide biosynthetic process"/>
    <property type="evidence" value="ECO:0007669"/>
    <property type="project" value="UniProtKB-UniRule"/>
</dbReference>
<dbReference type="GO" id="GO:0019379">
    <property type="term" value="P:sulfate assimilation, phosphoadenylyl sulfate reduction by phosphoadenylyl-sulfate reductase (thioredoxin)"/>
    <property type="evidence" value="ECO:0007669"/>
    <property type="project" value="UniProtKB-UniRule"/>
</dbReference>
<dbReference type="CDD" id="cd23945">
    <property type="entry name" value="PAPS_reductase"/>
    <property type="match status" value="1"/>
</dbReference>
<dbReference type="FunFam" id="3.40.50.620:FF:000095">
    <property type="entry name" value="Phosphoadenosine phosphosulfate reductase"/>
    <property type="match status" value="1"/>
</dbReference>
<dbReference type="Gene3D" id="3.40.50.620">
    <property type="entry name" value="HUPs"/>
    <property type="match status" value="1"/>
</dbReference>
<dbReference type="HAMAP" id="MF_00063">
    <property type="entry name" value="CysH"/>
    <property type="match status" value="1"/>
</dbReference>
<dbReference type="InterPro" id="IPR011798">
    <property type="entry name" value="APS_reductase"/>
</dbReference>
<dbReference type="InterPro" id="IPR004511">
    <property type="entry name" value="PAPS/APS_Rdtase"/>
</dbReference>
<dbReference type="InterPro" id="IPR002500">
    <property type="entry name" value="PAPS_reduct_dom"/>
</dbReference>
<dbReference type="InterPro" id="IPR014729">
    <property type="entry name" value="Rossmann-like_a/b/a_fold"/>
</dbReference>
<dbReference type="NCBIfam" id="TIGR02055">
    <property type="entry name" value="APS_reductase"/>
    <property type="match status" value="1"/>
</dbReference>
<dbReference type="NCBIfam" id="TIGR00434">
    <property type="entry name" value="cysH"/>
    <property type="match status" value="1"/>
</dbReference>
<dbReference type="NCBIfam" id="NF002537">
    <property type="entry name" value="PRK02090.1"/>
    <property type="match status" value="1"/>
</dbReference>
<dbReference type="PANTHER" id="PTHR46509">
    <property type="entry name" value="PHOSPHOADENOSINE PHOSPHOSULFATE REDUCTASE"/>
    <property type="match status" value="1"/>
</dbReference>
<dbReference type="PANTHER" id="PTHR46509:SF1">
    <property type="entry name" value="PHOSPHOADENOSINE PHOSPHOSULFATE REDUCTASE"/>
    <property type="match status" value="1"/>
</dbReference>
<dbReference type="Pfam" id="PF01507">
    <property type="entry name" value="PAPS_reduct"/>
    <property type="match status" value="1"/>
</dbReference>
<dbReference type="PIRSF" id="PIRSF000857">
    <property type="entry name" value="PAPS_reductase"/>
    <property type="match status" value="1"/>
</dbReference>
<dbReference type="SUPFAM" id="SSF52402">
    <property type="entry name" value="Adenine nucleotide alpha hydrolases-like"/>
    <property type="match status" value="1"/>
</dbReference>
<protein>
    <recommendedName>
        <fullName evidence="1">Adenosine 5'-phosphosulfate reductase</fullName>
        <shortName evidence="1">APS reductase</shortName>
        <ecNumber evidence="1">1.8.4.10</ecNumber>
    </recommendedName>
    <alternativeName>
        <fullName evidence="1">5'-adenylylsulfate reductase</fullName>
    </alternativeName>
    <alternativeName>
        <fullName evidence="1">Thioredoxin-dependent 5'-adenylylsulfate reductase</fullName>
    </alternativeName>
</protein>
<proteinExistence type="inferred from homology"/>
<evidence type="ECO:0000255" key="1">
    <source>
        <dbReference type="HAMAP-Rule" id="MF_00063"/>
    </source>
</evidence>
<comment type="function">
    <text evidence="1">Catalyzes the formation of sulfite from adenosine 5'-phosphosulfate (APS) using thioredoxin as an electron donor.</text>
</comment>
<comment type="catalytic activity">
    <reaction evidence="1">
        <text>[thioredoxin]-disulfide + sulfite + AMP + 2 H(+) = adenosine 5'-phosphosulfate + [thioredoxin]-dithiol</text>
        <dbReference type="Rhea" id="RHEA:21976"/>
        <dbReference type="Rhea" id="RHEA-COMP:10698"/>
        <dbReference type="Rhea" id="RHEA-COMP:10700"/>
        <dbReference type="ChEBI" id="CHEBI:15378"/>
        <dbReference type="ChEBI" id="CHEBI:17359"/>
        <dbReference type="ChEBI" id="CHEBI:29950"/>
        <dbReference type="ChEBI" id="CHEBI:50058"/>
        <dbReference type="ChEBI" id="CHEBI:58243"/>
        <dbReference type="ChEBI" id="CHEBI:456215"/>
        <dbReference type="EC" id="1.8.4.10"/>
    </reaction>
</comment>
<comment type="cofactor">
    <cofactor evidence="1">
        <name>[4Fe-4S] cluster</name>
        <dbReference type="ChEBI" id="CHEBI:49883"/>
    </cofactor>
    <text evidence="1">Binds 1 [4Fe-4S] cluster per subunit.</text>
</comment>
<comment type="pathway">
    <text evidence="1">Sulfur metabolism; hydrogen sulfide biosynthesis; sulfite from sulfate.</text>
</comment>
<comment type="subcellular location">
    <subcellularLocation>
        <location evidence="1">Cytoplasm</location>
    </subcellularLocation>
</comment>
<comment type="similarity">
    <text evidence="1">Belongs to the PAPS reductase family. CysH subfamily.</text>
</comment>